<proteinExistence type="inferred from homology"/>
<keyword id="KW-0004">4Fe-4S</keyword>
<keyword id="KW-0963">Cytoplasm</keyword>
<keyword id="KW-0408">Iron</keyword>
<keyword id="KW-0411">Iron-sulfur</keyword>
<keyword id="KW-0479">Metal-binding</keyword>
<keyword id="KW-0949">S-adenosyl-L-methionine</keyword>
<keyword id="KW-0808">Transferase</keyword>
<keyword id="KW-0819">tRNA processing</keyword>
<comment type="function">
    <text evidence="1">Catalyzes the methylthiolation of N6-(dimethylallyl)adenosine (i(6)A), leading to the formation of 2-methylthio-N6-(dimethylallyl)adenosine (ms(2)i(6)A) at position 37 in tRNAs that read codons beginning with uridine.</text>
</comment>
<comment type="catalytic activity">
    <reaction evidence="1">
        <text>N(6)-dimethylallyladenosine(37) in tRNA + (sulfur carrier)-SH + AH2 + 2 S-adenosyl-L-methionine = 2-methylsulfanyl-N(6)-dimethylallyladenosine(37) in tRNA + (sulfur carrier)-H + 5'-deoxyadenosine + L-methionine + A + S-adenosyl-L-homocysteine + 2 H(+)</text>
        <dbReference type="Rhea" id="RHEA:37067"/>
        <dbReference type="Rhea" id="RHEA-COMP:10375"/>
        <dbReference type="Rhea" id="RHEA-COMP:10376"/>
        <dbReference type="Rhea" id="RHEA-COMP:14737"/>
        <dbReference type="Rhea" id="RHEA-COMP:14739"/>
        <dbReference type="ChEBI" id="CHEBI:13193"/>
        <dbReference type="ChEBI" id="CHEBI:15378"/>
        <dbReference type="ChEBI" id="CHEBI:17319"/>
        <dbReference type="ChEBI" id="CHEBI:17499"/>
        <dbReference type="ChEBI" id="CHEBI:29917"/>
        <dbReference type="ChEBI" id="CHEBI:57844"/>
        <dbReference type="ChEBI" id="CHEBI:57856"/>
        <dbReference type="ChEBI" id="CHEBI:59789"/>
        <dbReference type="ChEBI" id="CHEBI:64428"/>
        <dbReference type="ChEBI" id="CHEBI:74415"/>
        <dbReference type="ChEBI" id="CHEBI:74417"/>
        <dbReference type="EC" id="2.8.4.3"/>
    </reaction>
</comment>
<comment type="cofactor">
    <cofactor evidence="1">
        <name>[4Fe-4S] cluster</name>
        <dbReference type="ChEBI" id="CHEBI:49883"/>
    </cofactor>
    <text evidence="1">Binds 2 [4Fe-4S] clusters. One cluster is coordinated with 3 cysteines and an exchangeable S-adenosyl-L-methionine.</text>
</comment>
<comment type="subunit">
    <text evidence="1">Monomer.</text>
</comment>
<comment type="subcellular location">
    <subcellularLocation>
        <location evidence="1">Cytoplasm</location>
    </subcellularLocation>
</comment>
<comment type="similarity">
    <text evidence="1">Belongs to the methylthiotransferase family. MiaB subfamily.</text>
</comment>
<name>MIAB_SHIBS</name>
<dbReference type="EC" id="2.8.4.3" evidence="1"/>
<dbReference type="EMBL" id="CP000036">
    <property type="protein sequence ID" value="ABB65224.1"/>
    <property type="molecule type" value="Genomic_DNA"/>
</dbReference>
<dbReference type="RefSeq" id="WP_000162733.1">
    <property type="nucleotide sequence ID" value="NC_007613.1"/>
</dbReference>
<dbReference type="SMR" id="Q324N4"/>
<dbReference type="GeneID" id="93776821"/>
<dbReference type="KEGG" id="sbo:SBO_0525"/>
<dbReference type="HOGENOM" id="CLU_018697_2_0_6"/>
<dbReference type="Proteomes" id="UP000007067">
    <property type="component" value="Chromosome"/>
</dbReference>
<dbReference type="GO" id="GO:0005829">
    <property type="term" value="C:cytosol"/>
    <property type="evidence" value="ECO:0007669"/>
    <property type="project" value="TreeGrafter"/>
</dbReference>
<dbReference type="GO" id="GO:0051539">
    <property type="term" value="F:4 iron, 4 sulfur cluster binding"/>
    <property type="evidence" value="ECO:0007669"/>
    <property type="project" value="UniProtKB-UniRule"/>
</dbReference>
<dbReference type="GO" id="GO:0046872">
    <property type="term" value="F:metal ion binding"/>
    <property type="evidence" value="ECO:0007669"/>
    <property type="project" value="UniProtKB-KW"/>
</dbReference>
<dbReference type="GO" id="GO:0035597">
    <property type="term" value="F:N6-isopentenyladenosine methylthiotransferase activity"/>
    <property type="evidence" value="ECO:0007669"/>
    <property type="project" value="TreeGrafter"/>
</dbReference>
<dbReference type="CDD" id="cd01335">
    <property type="entry name" value="Radical_SAM"/>
    <property type="match status" value="1"/>
</dbReference>
<dbReference type="FunFam" id="3.40.50.12160:FF:000001">
    <property type="entry name" value="tRNA-2-methylthio-N(6)-dimethylallyladenosine synthase"/>
    <property type="match status" value="1"/>
</dbReference>
<dbReference type="FunFam" id="3.80.30.20:FF:000001">
    <property type="entry name" value="tRNA-2-methylthio-N(6)-dimethylallyladenosine synthase 2"/>
    <property type="match status" value="1"/>
</dbReference>
<dbReference type="Gene3D" id="3.40.50.12160">
    <property type="entry name" value="Methylthiotransferase, N-terminal domain"/>
    <property type="match status" value="1"/>
</dbReference>
<dbReference type="Gene3D" id="3.80.30.20">
    <property type="entry name" value="tm_1862 like domain"/>
    <property type="match status" value="1"/>
</dbReference>
<dbReference type="HAMAP" id="MF_01864">
    <property type="entry name" value="tRNA_metthiotr_MiaB"/>
    <property type="match status" value="1"/>
</dbReference>
<dbReference type="InterPro" id="IPR006638">
    <property type="entry name" value="Elp3/MiaA/NifB-like_rSAM"/>
</dbReference>
<dbReference type="InterPro" id="IPR005839">
    <property type="entry name" value="Methylthiotransferase"/>
</dbReference>
<dbReference type="InterPro" id="IPR020612">
    <property type="entry name" value="Methylthiotransferase_CS"/>
</dbReference>
<dbReference type="InterPro" id="IPR013848">
    <property type="entry name" value="Methylthiotransferase_N"/>
</dbReference>
<dbReference type="InterPro" id="IPR038135">
    <property type="entry name" value="Methylthiotransferase_N_sf"/>
</dbReference>
<dbReference type="InterPro" id="IPR006463">
    <property type="entry name" value="MiaB_methiolase"/>
</dbReference>
<dbReference type="InterPro" id="IPR007197">
    <property type="entry name" value="rSAM"/>
</dbReference>
<dbReference type="InterPro" id="IPR023404">
    <property type="entry name" value="rSAM_horseshoe"/>
</dbReference>
<dbReference type="InterPro" id="IPR002792">
    <property type="entry name" value="TRAM_dom"/>
</dbReference>
<dbReference type="NCBIfam" id="TIGR01574">
    <property type="entry name" value="miaB-methiolase"/>
    <property type="match status" value="1"/>
</dbReference>
<dbReference type="NCBIfam" id="TIGR00089">
    <property type="entry name" value="MiaB/RimO family radical SAM methylthiotransferase"/>
    <property type="match status" value="1"/>
</dbReference>
<dbReference type="PANTHER" id="PTHR43020">
    <property type="entry name" value="CDK5 REGULATORY SUBUNIT-ASSOCIATED PROTEIN 1"/>
    <property type="match status" value="1"/>
</dbReference>
<dbReference type="PANTHER" id="PTHR43020:SF2">
    <property type="entry name" value="MITOCHONDRIAL TRNA METHYLTHIOTRANSFERASE CDK5RAP1"/>
    <property type="match status" value="1"/>
</dbReference>
<dbReference type="Pfam" id="PF04055">
    <property type="entry name" value="Radical_SAM"/>
    <property type="match status" value="1"/>
</dbReference>
<dbReference type="Pfam" id="PF01938">
    <property type="entry name" value="TRAM"/>
    <property type="match status" value="1"/>
</dbReference>
<dbReference type="Pfam" id="PF00919">
    <property type="entry name" value="UPF0004"/>
    <property type="match status" value="1"/>
</dbReference>
<dbReference type="SFLD" id="SFLDF00273">
    <property type="entry name" value="(dimethylallyl)adenosine_tRNA"/>
    <property type="match status" value="1"/>
</dbReference>
<dbReference type="SFLD" id="SFLDG01082">
    <property type="entry name" value="B12-binding_domain_containing"/>
    <property type="match status" value="1"/>
</dbReference>
<dbReference type="SFLD" id="SFLDS00029">
    <property type="entry name" value="Radical_SAM"/>
    <property type="match status" value="1"/>
</dbReference>
<dbReference type="SMART" id="SM00729">
    <property type="entry name" value="Elp3"/>
    <property type="match status" value="1"/>
</dbReference>
<dbReference type="SUPFAM" id="SSF102114">
    <property type="entry name" value="Radical SAM enzymes"/>
    <property type="match status" value="1"/>
</dbReference>
<dbReference type="PROSITE" id="PS51449">
    <property type="entry name" value="MTTASE_N"/>
    <property type="match status" value="1"/>
</dbReference>
<dbReference type="PROSITE" id="PS01278">
    <property type="entry name" value="MTTASE_RADICAL"/>
    <property type="match status" value="1"/>
</dbReference>
<dbReference type="PROSITE" id="PS51918">
    <property type="entry name" value="RADICAL_SAM"/>
    <property type="match status" value="1"/>
</dbReference>
<dbReference type="PROSITE" id="PS50926">
    <property type="entry name" value="TRAM"/>
    <property type="match status" value="1"/>
</dbReference>
<gene>
    <name evidence="1" type="primary">miaB</name>
    <name type="ordered locus">SBO_0525</name>
</gene>
<protein>
    <recommendedName>
        <fullName evidence="1">tRNA-2-methylthio-N(6)-dimethylallyladenosine synthase</fullName>
        <ecNumber evidence="1">2.8.4.3</ecNumber>
    </recommendedName>
    <alternativeName>
        <fullName evidence="1">(Dimethylallyl)adenosine tRNA methylthiotransferase MiaB</fullName>
    </alternativeName>
    <alternativeName>
        <fullName evidence="1">tRNA-i(6)A37 methylthiotransferase</fullName>
    </alternativeName>
</protein>
<organism>
    <name type="scientific">Shigella boydii serotype 4 (strain Sb227)</name>
    <dbReference type="NCBI Taxonomy" id="300268"/>
    <lineage>
        <taxon>Bacteria</taxon>
        <taxon>Pseudomonadati</taxon>
        <taxon>Pseudomonadota</taxon>
        <taxon>Gammaproteobacteria</taxon>
        <taxon>Enterobacterales</taxon>
        <taxon>Enterobacteriaceae</taxon>
        <taxon>Shigella</taxon>
    </lineage>
</organism>
<accession>Q324N4</accession>
<reference key="1">
    <citation type="journal article" date="2005" name="Nucleic Acids Res.">
        <title>Genome dynamics and diversity of Shigella species, the etiologic agents of bacillary dysentery.</title>
        <authorList>
            <person name="Yang F."/>
            <person name="Yang J."/>
            <person name="Zhang X."/>
            <person name="Chen L."/>
            <person name="Jiang Y."/>
            <person name="Yan Y."/>
            <person name="Tang X."/>
            <person name="Wang J."/>
            <person name="Xiong Z."/>
            <person name="Dong J."/>
            <person name="Xue Y."/>
            <person name="Zhu Y."/>
            <person name="Xu X."/>
            <person name="Sun L."/>
            <person name="Chen S."/>
            <person name="Nie H."/>
            <person name="Peng J."/>
            <person name="Xu J."/>
            <person name="Wang Y."/>
            <person name="Yuan Z."/>
            <person name="Wen Y."/>
            <person name="Yao Z."/>
            <person name="Shen Y."/>
            <person name="Qiang B."/>
            <person name="Hou Y."/>
            <person name="Yu J."/>
            <person name="Jin Q."/>
        </authorList>
    </citation>
    <scope>NUCLEOTIDE SEQUENCE [LARGE SCALE GENOMIC DNA]</scope>
    <source>
        <strain>Sb227</strain>
    </source>
</reference>
<feature type="chain" id="PRO_0000374551" description="tRNA-2-methylthio-N(6)-dimethylallyladenosine synthase">
    <location>
        <begin position="1"/>
        <end position="474"/>
    </location>
</feature>
<feature type="domain" description="MTTase N-terminal" evidence="1">
    <location>
        <begin position="3"/>
        <end position="120"/>
    </location>
</feature>
<feature type="domain" description="Radical SAM core" evidence="2">
    <location>
        <begin position="143"/>
        <end position="375"/>
    </location>
</feature>
<feature type="domain" description="TRAM" evidence="1">
    <location>
        <begin position="378"/>
        <end position="441"/>
    </location>
</feature>
<feature type="binding site" evidence="1">
    <location>
        <position position="12"/>
    </location>
    <ligand>
        <name>[4Fe-4S] cluster</name>
        <dbReference type="ChEBI" id="CHEBI:49883"/>
        <label>1</label>
    </ligand>
</feature>
<feature type="binding site" evidence="1">
    <location>
        <position position="49"/>
    </location>
    <ligand>
        <name>[4Fe-4S] cluster</name>
        <dbReference type="ChEBI" id="CHEBI:49883"/>
        <label>1</label>
    </ligand>
</feature>
<feature type="binding site" evidence="1">
    <location>
        <position position="83"/>
    </location>
    <ligand>
        <name>[4Fe-4S] cluster</name>
        <dbReference type="ChEBI" id="CHEBI:49883"/>
        <label>1</label>
    </ligand>
</feature>
<feature type="binding site" evidence="1">
    <location>
        <position position="157"/>
    </location>
    <ligand>
        <name>[4Fe-4S] cluster</name>
        <dbReference type="ChEBI" id="CHEBI:49883"/>
        <label>2</label>
        <note>4Fe-4S-S-AdoMet</note>
    </ligand>
</feature>
<feature type="binding site" evidence="1">
    <location>
        <position position="161"/>
    </location>
    <ligand>
        <name>[4Fe-4S] cluster</name>
        <dbReference type="ChEBI" id="CHEBI:49883"/>
        <label>2</label>
        <note>4Fe-4S-S-AdoMet</note>
    </ligand>
</feature>
<feature type="binding site" evidence="1">
    <location>
        <position position="164"/>
    </location>
    <ligand>
        <name>[4Fe-4S] cluster</name>
        <dbReference type="ChEBI" id="CHEBI:49883"/>
        <label>2</label>
        <note>4Fe-4S-S-AdoMet</note>
    </ligand>
</feature>
<sequence length="474" mass="53649">MTKKLHIKTWGCQMNEYDSSKMADLLDATHGYQLTDVAEEADVLLLNTCSIREKAQEKVFHQLGRWKLLKEKNPDLIIGVGGCVASQEGEHIRQRAHYVDIIFGPQTLHRLPEMINSVRGDRSPVVDISFPEIEKFDRLPEPRAEGPTAFVSIMEGCNKYCTYCVVPYTRGEEVSRPSDDILFEIAQLAAQGVREVNLLGQNVNAWRGENYDGSTGSFADLLRLVAAIDGIDRIRFTTSHPIEFTDDIIEVYRDTPELVSFLHLPVQSGSDRILNLMGRTHTALEYKAIIRKLRAARPDIQISSDFIVGFPGETTEDFEKTMKLIADVNFDMSYSFIFSARPGTPAADMVDDVPEEEKKQRLYILQERINQQAMAWSRRMLGTTQRILVEGTSRKSIMELSGRTENNRVVNFEGTPDMIGKFVDVEITDVYPNSLRGKVVRTEDEMGLRVAETPESVIARTRKENDLGVGYYQP</sequence>
<evidence type="ECO:0000255" key="1">
    <source>
        <dbReference type="HAMAP-Rule" id="MF_01864"/>
    </source>
</evidence>
<evidence type="ECO:0000255" key="2">
    <source>
        <dbReference type="PROSITE-ProRule" id="PRU01266"/>
    </source>
</evidence>